<comment type="similarity">
    <text evidence="1">Belongs to the UPF0145 family.</text>
</comment>
<gene>
    <name type="ordered locus">Blon_0093</name>
    <name type="ordered locus">BLIJ_0092</name>
</gene>
<accession>B7GSP5</accession>
<accession>E8MMU9</accession>
<organism>
    <name type="scientific">Bifidobacterium longum subsp. infantis (strain ATCC 15697 / DSM 20088 / JCM 1222 / NCTC 11817 / S12)</name>
    <dbReference type="NCBI Taxonomy" id="391904"/>
    <lineage>
        <taxon>Bacteria</taxon>
        <taxon>Bacillati</taxon>
        <taxon>Actinomycetota</taxon>
        <taxon>Actinomycetes</taxon>
        <taxon>Bifidobacteriales</taxon>
        <taxon>Bifidobacteriaceae</taxon>
        <taxon>Bifidobacterium</taxon>
    </lineage>
</organism>
<feature type="chain" id="PRO_1000200225" description="UPF0145 protein Blon_0093/BLIJ_0092">
    <location>
        <begin position="1"/>
        <end position="110"/>
    </location>
</feature>
<proteinExistence type="inferred from homology"/>
<protein>
    <recommendedName>
        <fullName evidence="1">UPF0145 protein Blon_0093/BLIJ_0092</fullName>
    </recommendedName>
</protein>
<name>Y093_BIFLS</name>
<evidence type="ECO:0000255" key="1">
    <source>
        <dbReference type="HAMAP-Rule" id="MF_00338"/>
    </source>
</evidence>
<sequence>MILVTTTPSVDGYTITNYQGIVFGEVVSGVNMFKDLGAGLRNMFGGRSQGYEEELMRARNEAIAEMQRRAEAMGAHAVVGVDIDYEVLGADNGMLMVTASGTAVQISRRA</sequence>
<dbReference type="EMBL" id="CP001095">
    <property type="protein sequence ID" value="ACJ51223.1"/>
    <property type="molecule type" value="Genomic_DNA"/>
</dbReference>
<dbReference type="EMBL" id="AP010889">
    <property type="protein sequence ID" value="BAJ67687.1"/>
    <property type="molecule type" value="Genomic_DNA"/>
</dbReference>
<dbReference type="RefSeq" id="WP_012576544.1">
    <property type="nucleotide sequence ID" value="NC_011593.1"/>
</dbReference>
<dbReference type="SMR" id="B7GSP5"/>
<dbReference type="KEGG" id="bln:Blon_0093"/>
<dbReference type="KEGG" id="blon:BLIJ_0092"/>
<dbReference type="PATRIC" id="fig|391904.8.peg.95"/>
<dbReference type="HOGENOM" id="CLU_117144_3_1_11"/>
<dbReference type="Proteomes" id="UP000001360">
    <property type="component" value="Chromosome"/>
</dbReference>
<dbReference type="Gene3D" id="3.30.110.70">
    <property type="entry name" value="Hypothetical protein apc22750. Chain B"/>
    <property type="match status" value="1"/>
</dbReference>
<dbReference type="HAMAP" id="MF_00338">
    <property type="entry name" value="UPF0145"/>
    <property type="match status" value="1"/>
</dbReference>
<dbReference type="InterPro" id="IPR035439">
    <property type="entry name" value="UPF0145_dom_sf"/>
</dbReference>
<dbReference type="InterPro" id="IPR002765">
    <property type="entry name" value="UPF0145_YbjQ-like"/>
</dbReference>
<dbReference type="NCBIfam" id="NF002224">
    <property type="entry name" value="PRK01119.1"/>
    <property type="match status" value="1"/>
</dbReference>
<dbReference type="PANTHER" id="PTHR34068">
    <property type="entry name" value="UPF0145 PROTEIN YBJQ"/>
    <property type="match status" value="1"/>
</dbReference>
<dbReference type="PANTHER" id="PTHR34068:SF1">
    <property type="entry name" value="UPF0145 PROTEIN YBJQ"/>
    <property type="match status" value="1"/>
</dbReference>
<dbReference type="Pfam" id="PF01906">
    <property type="entry name" value="YbjQ_1"/>
    <property type="match status" value="1"/>
</dbReference>
<dbReference type="SUPFAM" id="SSF117782">
    <property type="entry name" value="YbjQ-like"/>
    <property type="match status" value="1"/>
</dbReference>
<reference key="1">
    <citation type="journal article" date="2008" name="Proc. Natl. Acad. Sci. U.S.A.">
        <title>The genome sequence of Bifidobacterium longum subsp. infantis reveals adaptations for milk utilization within the infant microbiome.</title>
        <authorList>
            <person name="Sela D.A."/>
            <person name="Chapman J."/>
            <person name="Adeuya A."/>
            <person name="Kim J.H."/>
            <person name="Chen F."/>
            <person name="Whitehead T.R."/>
            <person name="Lapidus A."/>
            <person name="Rokhsar D.S."/>
            <person name="Lebrilla C.B."/>
            <person name="German J.B."/>
            <person name="Price N.P."/>
            <person name="Richardson P.M."/>
            <person name="Mills D.A."/>
        </authorList>
    </citation>
    <scope>NUCLEOTIDE SEQUENCE [LARGE SCALE GENOMIC DNA]</scope>
    <source>
        <strain>ATCC 15697 / DSM 20088 / JCM 1222 / NCTC 11817 / S12</strain>
    </source>
</reference>
<reference key="2">
    <citation type="journal article" date="2011" name="Nature">
        <title>Bifidobacteria can protect from enteropathogenic infection through production of acetate.</title>
        <authorList>
            <person name="Fukuda S."/>
            <person name="Toh H."/>
            <person name="Hase K."/>
            <person name="Oshima K."/>
            <person name="Nakanishi Y."/>
            <person name="Yoshimura K."/>
            <person name="Tobe T."/>
            <person name="Clarke J.M."/>
            <person name="Topping D.L."/>
            <person name="Suzuki T."/>
            <person name="Taylor T.D."/>
            <person name="Itoh K."/>
            <person name="Kikuchi J."/>
            <person name="Morita H."/>
            <person name="Hattori M."/>
            <person name="Ohno H."/>
        </authorList>
    </citation>
    <scope>NUCLEOTIDE SEQUENCE [LARGE SCALE GENOMIC DNA]</scope>
    <source>
        <strain>ATCC 15697 / DSM 20088 / JCM 1222 / NCTC 11817 / S12</strain>
    </source>
</reference>